<feature type="chain" id="PRO_0000283469" description="Putative F-box protein At3g49520">
    <location>
        <begin position="1"/>
        <end position="388"/>
    </location>
</feature>
<feature type="domain" description="F-box" evidence="1">
    <location>
        <begin position="1"/>
        <end position="47"/>
    </location>
</feature>
<proteinExistence type="predicted"/>
<name>FB199_ARATH</name>
<accession>Q9SCK7</accession>
<organism>
    <name type="scientific">Arabidopsis thaliana</name>
    <name type="common">Mouse-ear cress</name>
    <dbReference type="NCBI Taxonomy" id="3702"/>
    <lineage>
        <taxon>Eukaryota</taxon>
        <taxon>Viridiplantae</taxon>
        <taxon>Streptophyta</taxon>
        <taxon>Embryophyta</taxon>
        <taxon>Tracheophyta</taxon>
        <taxon>Spermatophyta</taxon>
        <taxon>Magnoliopsida</taxon>
        <taxon>eudicotyledons</taxon>
        <taxon>Gunneridae</taxon>
        <taxon>Pentapetalae</taxon>
        <taxon>rosids</taxon>
        <taxon>malvids</taxon>
        <taxon>Brassicales</taxon>
        <taxon>Brassicaceae</taxon>
        <taxon>Camelineae</taxon>
        <taxon>Arabidopsis</taxon>
    </lineage>
</organism>
<protein>
    <recommendedName>
        <fullName>Putative F-box protein At3g49520</fullName>
    </recommendedName>
</protein>
<keyword id="KW-1185">Reference proteome</keyword>
<evidence type="ECO:0000255" key="1">
    <source>
        <dbReference type="PROSITE-ProRule" id="PRU00080"/>
    </source>
</evidence>
<gene>
    <name type="ordered locus">At3g49520</name>
    <name type="ORF">T9C5.110</name>
</gene>
<reference key="1">
    <citation type="journal article" date="2000" name="Nature">
        <title>Sequence and analysis of chromosome 3 of the plant Arabidopsis thaliana.</title>
        <authorList>
            <person name="Salanoubat M."/>
            <person name="Lemcke K."/>
            <person name="Rieger M."/>
            <person name="Ansorge W."/>
            <person name="Unseld M."/>
            <person name="Fartmann B."/>
            <person name="Valle G."/>
            <person name="Bloecker H."/>
            <person name="Perez-Alonso M."/>
            <person name="Obermaier B."/>
            <person name="Delseny M."/>
            <person name="Boutry M."/>
            <person name="Grivell L.A."/>
            <person name="Mache R."/>
            <person name="Puigdomenech P."/>
            <person name="De Simone V."/>
            <person name="Choisne N."/>
            <person name="Artiguenave F."/>
            <person name="Robert C."/>
            <person name="Brottier P."/>
            <person name="Wincker P."/>
            <person name="Cattolico L."/>
            <person name="Weissenbach J."/>
            <person name="Saurin W."/>
            <person name="Quetier F."/>
            <person name="Schaefer M."/>
            <person name="Mueller-Auer S."/>
            <person name="Gabel C."/>
            <person name="Fuchs M."/>
            <person name="Benes V."/>
            <person name="Wurmbach E."/>
            <person name="Drzonek H."/>
            <person name="Erfle H."/>
            <person name="Jordan N."/>
            <person name="Bangert S."/>
            <person name="Wiedelmann R."/>
            <person name="Kranz H."/>
            <person name="Voss H."/>
            <person name="Holland R."/>
            <person name="Brandt P."/>
            <person name="Nyakatura G."/>
            <person name="Vezzi A."/>
            <person name="D'Angelo M."/>
            <person name="Pallavicini A."/>
            <person name="Toppo S."/>
            <person name="Simionati B."/>
            <person name="Conrad A."/>
            <person name="Hornischer K."/>
            <person name="Kauer G."/>
            <person name="Loehnert T.-H."/>
            <person name="Nordsiek G."/>
            <person name="Reichelt J."/>
            <person name="Scharfe M."/>
            <person name="Schoen O."/>
            <person name="Bargues M."/>
            <person name="Terol J."/>
            <person name="Climent J."/>
            <person name="Navarro P."/>
            <person name="Collado C."/>
            <person name="Perez-Perez A."/>
            <person name="Ottenwaelder B."/>
            <person name="Duchemin D."/>
            <person name="Cooke R."/>
            <person name="Laudie M."/>
            <person name="Berger-Llauro C."/>
            <person name="Purnelle B."/>
            <person name="Masuy D."/>
            <person name="de Haan M."/>
            <person name="Maarse A.C."/>
            <person name="Alcaraz J.-P."/>
            <person name="Cottet A."/>
            <person name="Casacuberta E."/>
            <person name="Monfort A."/>
            <person name="Argiriou A."/>
            <person name="Flores M."/>
            <person name="Liguori R."/>
            <person name="Vitale D."/>
            <person name="Mannhaupt G."/>
            <person name="Haase D."/>
            <person name="Schoof H."/>
            <person name="Rudd S."/>
            <person name="Zaccaria P."/>
            <person name="Mewes H.-W."/>
            <person name="Mayer K.F.X."/>
            <person name="Kaul S."/>
            <person name="Town C.D."/>
            <person name="Koo H.L."/>
            <person name="Tallon L.J."/>
            <person name="Jenkins J."/>
            <person name="Rooney T."/>
            <person name="Rizzo M."/>
            <person name="Walts A."/>
            <person name="Utterback T."/>
            <person name="Fujii C.Y."/>
            <person name="Shea T.P."/>
            <person name="Creasy T.H."/>
            <person name="Haas B."/>
            <person name="Maiti R."/>
            <person name="Wu D."/>
            <person name="Peterson J."/>
            <person name="Van Aken S."/>
            <person name="Pai G."/>
            <person name="Militscher J."/>
            <person name="Sellers P."/>
            <person name="Gill J.E."/>
            <person name="Feldblyum T.V."/>
            <person name="Preuss D."/>
            <person name="Lin X."/>
            <person name="Nierman W.C."/>
            <person name="Salzberg S.L."/>
            <person name="White O."/>
            <person name="Venter J.C."/>
            <person name="Fraser C.M."/>
            <person name="Kaneko T."/>
            <person name="Nakamura Y."/>
            <person name="Sato S."/>
            <person name="Kato T."/>
            <person name="Asamizu E."/>
            <person name="Sasamoto S."/>
            <person name="Kimura T."/>
            <person name="Idesawa K."/>
            <person name="Kawashima K."/>
            <person name="Kishida Y."/>
            <person name="Kiyokawa C."/>
            <person name="Kohara M."/>
            <person name="Matsumoto M."/>
            <person name="Matsuno A."/>
            <person name="Muraki A."/>
            <person name="Nakayama S."/>
            <person name="Nakazaki N."/>
            <person name="Shinpo S."/>
            <person name="Takeuchi C."/>
            <person name="Wada T."/>
            <person name="Watanabe A."/>
            <person name="Yamada M."/>
            <person name="Yasuda M."/>
            <person name="Tabata S."/>
        </authorList>
    </citation>
    <scope>NUCLEOTIDE SEQUENCE [LARGE SCALE GENOMIC DNA]</scope>
    <source>
        <strain>cv. Columbia</strain>
    </source>
</reference>
<reference key="2">
    <citation type="journal article" date="2017" name="Plant J.">
        <title>Araport11: a complete reannotation of the Arabidopsis thaliana reference genome.</title>
        <authorList>
            <person name="Cheng C.Y."/>
            <person name="Krishnakumar V."/>
            <person name="Chan A.P."/>
            <person name="Thibaud-Nissen F."/>
            <person name="Schobel S."/>
            <person name="Town C.D."/>
        </authorList>
    </citation>
    <scope>GENOME REANNOTATION</scope>
    <source>
        <strain>cv. Columbia</strain>
    </source>
</reference>
<sequence>MTTISDLPYDLVKEIFSWVPFTSLRAVRSTCKTWNALSKNQIFGKKSVARNQFLELMILDSRVCSLRFDLQKIRNEDEEDLVDPSMKQISIPNNDDQVEISRVYHCDGLLLCIPKDNSSLMLWNPYLGQTKRIRPKNTFHRDDSFALGYNNRNHKILRLNEENESHIDVYDFSSDSWRTVPDDNPYRDELIYQSGVSLKGNAYFFDREVTTEAEVGTEDLLITGIEDYLRCFDFTTERFGPRLPLPFILPSPSFEYLALSWARDDKLAVLYSHYDTFDIIEIWISTKIEPNAVSWSTFLKVDMSLINGLTDDFLIRFEPKSFFIDEEKKVAVLFDTKVTETCRYQMAYIVGDDGYFKSVNIGVISNSHWIGGELVRSSYVPSLLQLQV</sequence>
<dbReference type="EMBL" id="AL132964">
    <property type="protein sequence ID" value="CAB62456.1"/>
    <property type="molecule type" value="Genomic_DNA"/>
</dbReference>
<dbReference type="EMBL" id="CP002686">
    <property type="protein sequence ID" value="AEE78552.1"/>
    <property type="molecule type" value="Genomic_DNA"/>
</dbReference>
<dbReference type="PIR" id="T46229">
    <property type="entry name" value="T46229"/>
</dbReference>
<dbReference type="RefSeq" id="NP_190521.1">
    <property type="nucleotide sequence ID" value="NM_114812.1"/>
</dbReference>
<dbReference type="SMR" id="Q9SCK7"/>
<dbReference type="BioGRID" id="9432">
    <property type="interactions" value="1"/>
</dbReference>
<dbReference type="FunCoup" id="Q9SCK7">
    <property type="interactions" value="5"/>
</dbReference>
<dbReference type="IntAct" id="Q9SCK7">
    <property type="interactions" value="1"/>
</dbReference>
<dbReference type="PaxDb" id="3702-AT3G49520.1"/>
<dbReference type="EnsemblPlants" id="AT3G49520.1">
    <property type="protein sequence ID" value="AT3G49520.1"/>
    <property type="gene ID" value="AT3G49520"/>
</dbReference>
<dbReference type="GeneID" id="824114"/>
<dbReference type="Gramene" id="AT3G49520.1">
    <property type="protein sequence ID" value="AT3G49520.1"/>
    <property type="gene ID" value="AT3G49520"/>
</dbReference>
<dbReference type="KEGG" id="ath:AT3G49520"/>
<dbReference type="Araport" id="AT3G49520"/>
<dbReference type="TAIR" id="AT3G49520"/>
<dbReference type="HOGENOM" id="CLU_034692_0_0_1"/>
<dbReference type="InParanoid" id="Q9SCK7"/>
<dbReference type="OMA" id="WIPEICE"/>
<dbReference type="PhylomeDB" id="Q9SCK7"/>
<dbReference type="PRO" id="PR:Q9SCK7"/>
<dbReference type="Proteomes" id="UP000006548">
    <property type="component" value="Chromosome 3"/>
</dbReference>
<dbReference type="ExpressionAtlas" id="Q9SCK7">
    <property type="expression patterns" value="baseline and differential"/>
</dbReference>
<dbReference type="CDD" id="cd22157">
    <property type="entry name" value="F-box_AtFBW1-like"/>
    <property type="match status" value="1"/>
</dbReference>
<dbReference type="Gene3D" id="1.20.1280.50">
    <property type="match status" value="1"/>
</dbReference>
<dbReference type="InterPro" id="IPR006527">
    <property type="entry name" value="F-box-assoc_dom_typ1"/>
</dbReference>
<dbReference type="InterPro" id="IPR017451">
    <property type="entry name" value="F-box-assoc_interact_dom"/>
</dbReference>
<dbReference type="InterPro" id="IPR036047">
    <property type="entry name" value="F-box-like_dom_sf"/>
</dbReference>
<dbReference type="InterPro" id="IPR001810">
    <property type="entry name" value="F-box_dom"/>
</dbReference>
<dbReference type="InterPro" id="IPR011043">
    <property type="entry name" value="Gal_Oxase/kelch_b-propeller"/>
</dbReference>
<dbReference type="InterPro" id="IPR050796">
    <property type="entry name" value="SCF_F-box_component"/>
</dbReference>
<dbReference type="NCBIfam" id="TIGR01640">
    <property type="entry name" value="F_box_assoc_1"/>
    <property type="match status" value="1"/>
</dbReference>
<dbReference type="PANTHER" id="PTHR31672">
    <property type="entry name" value="BNACNNG10540D PROTEIN"/>
    <property type="match status" value="1"/>
</dbReference>
<dbReference type="PANTHER" id="PTHR31672:SF10">
    <property type="entry name" value="F-BOX DOMAIN-CONTAINING PROTEIN"/>
    <property type="match status" value="1"/>
</dbReference>
<dbReference type="Pfam" id="PF00646">
    <property type="entry name" value="F-box"/>
    <property type="match status" value="1"/>
</dbReference>
<dbReference type="Pfam" id="PF07734">
    <property type="entry name" value="FBA_1"/>
    <property type="match status" value="1"/>
</dbReference>
<dbReference type="SMART" id="SM00256">
    <property type="entry name" value="FBOX"/>
    <property type="match status" value="1"/>
</dbReference>
<dbReference type="SUPFAM" id="SSF81383">
    <property type="entry name" value="F-box domain"/>
    <property type="match status" value="1"/>
</dbReference>
<dbReference type="SUPFAM" id="SSF50965">
    <property type="entry name" value="Galactose oxidase, central domain"/>
    <property type="match status" value="1"/>
</dbReference>
<dbReference type="PROSITE" id="PS50181">
    <property type="entry name" value="FBOX"/>
    <property type="match status" value="1"/>
</dbReference>